<gene>
    <name type="ordered locus">SAHV_1729</name>
</gene>
<dbReference type="EMBL" id="AP009324">
    <property type="protein sequence ID" value="BAF78612.1"/>
    <property type="molecule type" value="Genomic_DNA"/>
</dbReference>
<dbReference type="RefSeq" id="WP_001091387.1">
    <property type="nucleotide sequence ID" value="NZ_CTYB01000008.1"/>
</dbReference>
<dbReference type="KEGG" id="saw:SAHV_1729"/>
<dbReference type="HOGENOM" id="CLU_085634_0_0_9"/>
<dbReference type="HAMAP" id="MF_01548">
    <property type="entry name" value="UPF0354"/>
    <property type="match status" value="1"/>
</dbReference>
<dbReference type="InterPro" id="IPR010838">
    <property type="entry name" value="DUF1444"/>
</dbReference>
<dbReference type="NCBIfam" id="NF010189">
    <property type="entry name" value="PRK13668.1"/>
    <property type="match status" value="1"/>
</dbReference>
<dbReference type="Pfam" id="PF07285">
    <property type="entry name" value="DUF1444"/>
    <property type="match status" value="1"/>
</dbReference>
<dbReference type="PIRSF" id="PIRSF012562">
    <property type="entry name" value="UCP012562"/>
    <property type="match status" value="1"/>
</dbReference>
<comment type="similarity">
    <text evidence="1">Belongs to the UPF0354 family.</text>
</comment>
<evidence type="ECO:0000255" key="1">
    <source>
        <dbReference type="HAMAP-Rule" id="MF_01548"/>
    </source>
</evidence>
<feature type="chain" id="PRO_1000068814" description="UPF0354 protein SAHV_1729">
    <location>
        <begin position="1"/>
        <end position="285"/>
    </location>
</feature>
<organism>
    <name type="scientific">Staphylococcus aureus (strain Mu3 / ATCC 700698)</name>
    <dbReference type="NCBI Taxonomy" id="418127"/>
    <lineage>
        <taxon>Bacteria</taxon>
        <taxon>Bacillati</taxon>
        <taxon>Bacillota</taxon>
        <taxon>Bacilli</taxon>
        <taxon>Bacillales</taxon>
        <taxon>Staphylococcaceae</taxon>
        <taxon>Staphylococcus</taxon>
    </lineage>
</organism>
<protein>
    <recommendedName>
        <fullName evidence="1">UPF0354 protein SAHV_1729</fullName>
    </recommendedName>
</protein>
<accession>A7X3H9</accession>
<reference key="1">
    <citation type="journal article" date="2008" name="Antimicrob. Agents Chemother.">
        <title>Mutated response regulator graR is responsible for phenotypic conversion of Staphylococcus aureus from heterogeneous vancomycin-intermediate resistance to vancomycin-intermediate resistance.</title>
        <authorList>
            <person name="Neoh H.-M."/>
            <person name="Cui L."/>
            <person name="Yuzawa H."/>
            <person name="Takeuchi F."/>
            <person name="Matsuo M."/>
            <person name="Hiramatsu K."/>
        </authorList>
    </citation>
    <scope>NUCLEOTIDE SEQUENCE [LARGE SCALE GENOMIC DNA]</scope>
    <source>
        <strain>Mu3 / ATCC 700698</strain>
    </source>
</reference>
<sequence>MNTFQMRDKLKERLSHLDVDFKFNREEETLRIYRTDNNKGITIKLNAIVAKYEDKKEKIVDEIVYYVDEAIAQMADKTLESISSSQIMPVIRATSFDKKTKQGVPFIYDEHTAETAVYYAVDLGKSYRLIDESMLEDLKLTEQQIREMSLFNVRKLSNSYTTDEVKGNIFYFINSNDGYDASRILNTAFLNEIEAQCQGEMLVAVPHQDVLIIADIRNKTGYDVMAHLTMEFFTKGLVPITSLSFGYKQGHLEPIFILGKNNKQKRDPNVIQRLEANRRKFNKDK</sequence>
<proteinExistence type="inferred from homology"/>
<name>Y1729_STAA1</name>